<proteinExistence type="evidence at protein level"/>
<keyword id="KW-0002">3D-structure</keyword>
<keyword id="KW-0030">Aminoacyl-tRNA synthetase</keyword>
<keyword id="KW-0067">ATP-binding</keyword>
<keyword id="KW-0963">Cytoplasm</keyword>
<keyword id="KW-0436">Ligase</keyword>
<keyword id="KW-0547">Nucleotide-binding</keyword>
<keyword id="KW-0648">Protein biosynthesis</keyword>
<keyword id="KW-1185">Reference proteome</keyword>
<name>SYLA_AQUAE</name>
<accession>O66680</accession>
<protein>
    <recommendedName>
        <fullName>Leucine--tRNA ligase subunit alpha</fullName>
        <ecNumber>6.1.1.4</ecNumber>
    </recommendedName>
    <alternativeName>
        <fullName>Leucyl-tRNA synthetase subunit alpha</fullName>
        <shortName>LeuRS</shortName>
    </alternativeName>
</protein>
<reference key="1">
    <citation type="journal article" date="1998" name="Nature">
        <title>The complete genome of the hyperthermophilic bacterium Aquifex aeolicus.</title>
        <authorList>
            <person name="Deckert G."/>
            <person name="Warren P.V."/>
            <person name="Gaasterland T."/>
            <person name="Young W.G."/>
            <person name="Lenox A.L."/>
            <person name="Graham D.E."/>
            <person name="Overbeek R."/>
            <person name="Snead M.A."/>
            <person name="Keller M."/>
            <person name="Aujay M."/>
            <person name="Huber R."/>
            <person name="Feldman R.A."/>
            <person name="Short J.M."/>
            <person name="Olsen G.J."/>
            <person name="Swanson R.V."/>
        </authorList>
    </citation>
    <scope>NUCLEOTIDE SEQUENCE [LARGE SCALE GENOMIC DNA]</scope>
    <source>
        <strain>VF5</strain>
    </source>
</reference>
<sequence length="634" mass="73989">MMKEFNPREIEKKWQKRWEEAGVFKAQEGKPNKFYVLEMFPYPSGRIHMGHVRNYTIGDAIARYLKMRGKNILHPMGWDAFGLPAENAAIKHGIHPAKWTYENIDYMKKQLKILGFSYDWDREIATCDPEYYKWNQWIFLKMLERGIAYRKTAKVNWCPHDQTVLANEQVIEGKCWRCGTPIVQKEVPSWFLRITAYADRLLEDLKKLEGKWPERVIAQQRNWIGRSEGALIRFYVEIEEPEKFLNCVPEELKETLLKEKRIYIDVFTTRPDTVFGATFVVLAPEHPLVPVLACIGERLGNACYSDVENFVEKMKKMSTRERTMEEDKEGVFLGVYATNPANGEKIPVWSANYVLYEYGTGAIMCVPAHDQRDWEFAKKYDLPIKVVVKPEGAWDFEKGAYEGKGTLVNSDGFDGLDSETAKRKITEWLQDRGLGEKKVSYRLRDWNISRQRYWGTPIPVVYCEKCGMVPVPEDQLPVKLPLDVKFTGQGNPLETSEEFVNTTCPKCGGKARRETDTMDTFFDSSWYFLRFCDPKNDREPFSREKVDYWMPVDVYIGGIEHAVLHLLYARFFQKFLKDLGLVRDDEPFEKLITQGMVLKKWVSVKKLLDYLGLSEEDEVEELKKRLEELGARRA</sequence>
<feature type="chain" id="PRO_0000151962" description="Leucine--tRNA ligase subunit alpha">
    <location>
        <begin position="1"/>
        <end position="634"/>
    </location>
</feature>
<feature type="short sequence motif" description="'HIGH' region">
    <location>
        <begin position="43"/>
        <end position="51"/>
    </location>
</feature>
<feature type="strand" evidence="3">
    <location>
        <begin position="230"/>
        <end position="237"/>
    </location>
</feature>
<feature type="helix" evidence="3">
    <location>
        <begin position="241"/>
        <end position="243"/>
    </location>
</feature>
<feature type="helix" evidence="3">
    <location>
        <begin position="245"/>
        <end position="247"/>
    </location>
</feature>
<feature type="helix" evidence="3">
    <location>
        <begin position="250"/>
        <end position="259"/>
    </location>
</feature>
<feature type="strand" evidence="3">
    <location>
        <begin position="260"/>
        <end position="269"/>
    </location>
</feature>
<feature type="helix" evidence="3">
    <location>
        <begin position="271"/>
        <end position="276"/>
    </location>
</feature>
<feature type="strand" evidence="3">
    <location>
        <begin position="279"/>
        <end position="282"/>
    </location>
</feature>
<feature type="helix" evidence="3">
    <location>
        <begin position="288"/>
        <end position="298"/>
    </location>
</feature>
<feature type="helix" evidence="3">
    <location>
        <begin position="304"/>
        <end position="315"/>
    </location>
</feature>
<feature type="helix" evidence="3">
    <location>
        <begin position="319"/>
        <end position="323"/>
    </location>
</feature>
<feature type="strand" evidence="3">
    <location>
        <begin position="330"/>
        <end position="338"/>
    </location>
</feature>
<feature type="turn" evidence="3">
    <location>
        <begin position="340"/>
        <end position="342"/>
    </location>
</feature>
<feature type="strand" evidence="3">
    <location>
        <begin position="345"/>
        <end position="351"/>
    </location>
</feature>
<feature type="strand" evidence="4">
    <location>
        <begin position="356"/>
        <end position="358"/>
    </location>
</feature>
<feature type="strand" evidence="3">
    <location>
        <begin position="361"/>
        <end position="365"/>
    </location>
</feature>
<feature type="turn" evidence="3">
    <location>
        <begin position="367"/>
        <end position="369"/>
    </location>
</feature>
<feature type="helix" evidence="3">
    <location>
        <begin position="371"/>
        <end position="380"/>
    </location>
</feature>
<feature type="turn" evidence="3">
    <location>
        <begin position="396"/>
        <end position="398"/>
    </location>
</feature>
<feature type="helix" evidence="3">
    <location>
        <begin position="411"/>
        <end position="413"/>
    </location>
</feature>
<feature type="helix" evidence="3">
    <location>
        <begin position="418"/>
        <end position="431"/>
    </location>
</feature>
<feature type="strand" evidence="3">
    <location>
        <begin position="434"/>
        <end position="437"/>
    </location>
</feature>
<organism>
    <name type="scientific">Aquifex aeolicus (strain VF5)</name>
    <dbReference type="NCBI Taxonomy" id="224324"/>
    <lineage>
        <taxon>Bacteria</taxon>
        <taxon>Pseudomonadati</taxon>
        <taxon>Aquificota</taxon>
        <taxon>Aquificia</taxon>
        <taxon>Aquificales</taxon>
        <taxon>Aquificaceae</taxon>
        <taxon>Aquifex</taxon>
    </lineage>
</organism>
<comment type="catalytic activity">
    <reaction>
        <text>tRNA(Leu) + L-leucine + ATP = L-leucyl-tRNA(Leu) + AMP + diphosphate</text>
        <dbReference type="Rhea" id="RHEA:11688"/>
        <dbReference type="Rhea" id="RHEA-COMP:9613"/>
        <dbReference type="Rhea" id="RHEA-COMP:9622"/>
        <dbReference type="ChEBI" id="CHEBI:30616"/>
        <dbReference type="ChEBI" id="CHEBI:33019"/>
        <dbReference type="ChEBI" id="CHEBI:57427"/>
        <dbReference type="ChEBI" id="CHEBI:78442"/>
        <dbReference type="ChEBI" id="CHEBI:78494"/>
        <dbReference type="ChEBI" id="CHEBI:456215"/>
        <dbReference type="EC" id="6.1.1.4"/>
    </reaction>
</comment>
<comment type="subunit">
    <text>Seems to consist of an alpha chain and a beta chain.</text>
</comment>
<comment type="subcellular location">
    <subcellularLocation>
        <location evidence="1">Cytoplasm</location>
    </subcellularLocation>
</comment>
<comment type="similarity">
    <text evidence="2">Belongs to the class-I aminoacyl-tRNA synthetase family.</text>
</comment>
<gene>
    <name type="primary">leuS</name>
    <name type="ordered locus">aq_351</name>
</gene>
<dbReference type="EC" id="6.1.1.4"/>
<dbReference type="EMBL" id="AE000657">
    <property type="protein sequence ID" value="AAC06643.1"/>
    <property type="molecule type" value="Genomic_DNA"/>
</dbReference>
<dbReference type="PIR" id="D70331">
    <property type="entry name" value="D70331"/>
</dbReference>
<dbReference type="RefSeq" id="NP_213240.1">
    <property type="nucleotide sequence ID" value="NC_000918.1"/>
</dbReference>
<dbReference type="RefSeq" id="WP_010880178.1">
    <property type="nucleotide sequence ID" value="NC_000918.1"/>
</dbReference>
<dbReference type="PDB" id="3O0A">
    <property type="method" value="X-ray"/>
    <property type="resolution" value="1.77 A"/>
    <property type="chains" value="A/B=225-443"/>
</dbReference>
<dbReference type="PDB" id="3PZ0">
    <property type="method" value="X-ray"/>
    <property type="resolution" value="2.40 A"/>
    <property type="chains" value="A/B/C/D=228-439"/>
</dbReference>
<dbReference type="PDB" id="3PZ5">
    <property type="method" value="X-ray"/>
    <property type="resolution" value="2.50 A"/>
    <property type="chains" value="A/B=228-439"/>
</dbReference>
<dbReference type="PDBsum" id="3O0A"/>
<dbReference type="PDBsum" id="3PZ0"/>
<dbReference type="PDBsum" id="3PZ5"/>
<dbReference type="SMR" id="O66680"/>
<dbReference type="FunCoup" id="O66680">
    <property type="interactions" value="480"/>
</dbReference>
<dbReference type="STRING" id="224324.aq_351"/>
<dbReference type="EnsemblBacteria" id="AAC06643">
    <property type="protein sequence ID" value="AAC06643"/>
    <property type="gene ID" value="aq_351"/>
</dbReference>
<dbReference type="KEGG" id="aae:aq_351"/>
<dbReference type="PATRIC" id="fig|224324.8.peg.284"/>
<dbReference type="eggNOG" id="COG0495">
    <property type="taxonomic scope" value="Bacteria"/>
</dbReference>
<dbReference type="HOGENOM" id="CLU_004427_0_1_0"/>
<dbReference type="InParanoid" id="O66680"/>
<dbReference type="OrthoDB" id="9810365at2"/>
<dbReference type="BRENDA" id="6.1.1.4">
    <property type="organism ID" value="396"/>
</dbReference>
<dbReference type="EvolutionaryTrace" id="O66680"/>
<dbReference type="Proteomes" id="UP000000798">
    <property type="component" value="Chromosome"/>
</dbReference>
<dbReference type="GO" id="GO:0005829">
    <property type="term" value="C:cytosol"/>
    <property type="evidence" value="ECO:0000318"/>
    <property type="project" value="GO_Central"/>
</dbReference>
<dbReference type="GO" id="GO:0002161">
    <property type="term" value="F:aminoacyl-tRNA deacylase activity"/>
    <property type="evidence" value="ECO:0007669"/>
    <property type="project" value="InterPro"/>
</dbReference>
<dbReference type="GO" id="GO:0005524">
    <property type="term" value="F:ATP binding"/>
    <property type="evidence" value="ECO:0007669"/>
    <property type="project" value="UniProtKB-KW"/>
</dbReference>
<dbReference type="GO" id="GO:0004823">
    <property type="term" value="F:leucine-tRNA ligase activity"/>
    <property type="evidence" value="ECO:0000318"/>
    <property type="project" value="GO_Central"/>
</dbReference>
<dbReference type="GO" id="GO:0006429">
    <property type="term" value="P:leucyl-tRNA aminoacylation"/>
    <property type="evidence" value="ECO:0000318"/>
    <property type="project" value="GO_Central"/>
</dbReference>
<dbReference type="CDD" id="cd00812">
    <property type="entry name" value="LeuRS_core"/>
    <property type="match status" value="1"/>
</dbReference>
<dbReference type="FunFam" id="3.40.50.620:FF:000003">
    <property type="entry name" value="Leucine--tRNA ligase"/>
    <property type="match status" value="1"/>
</dbReference>
<dbReference type="FunFam" id="3.40.50.620:FF:000265">
    <property type="entry name" value="Leucine--tRNA ligase"/>
    <property type="match status" value="1"/>
</dbReference>
<dbReference type="Gene3D" id="3.40.50.620">
    <property type="entry name" value="HUPs"/>
    <property type="match status" value="2"/>
</dbReference>
<dbReference type="Gene3D" id="3.90.740.10">
    <property type="entry name" value="Valyl/Leucyl/Isoleucyl-tRNA synthetase, editing domain"/>
    <property type="match status" value="1"/>
</dbReference>
<dbReference type="InterPro" id="IPR001412">
    <property type="entry name" value="aa-tRNA-synth_I_CS"/>
</dbReference>
<dbReference type="InterPro" id="IPR002300">
    <property type="entry name" value="aa-tRNA-synth_Ia"/>
</dbReference>
<dbReference type="InterPro" id="IPR002302">
    <property type="entry name" value="Leu-tRNA-ligase"/>
</dbReference>
<dbReference type="InterPro" id="IPR025709">
    <property type="entry name" value="Leu_tRNA-synth_edit"/>
</dbReference>
<dbReference type="InterPro" id="IPR015413">
    <property type="entry name" value="Methionyl/Leucyl_tRNA_Synth"/>
</dbReference>
<dbReference type="InterPro" id="IPR014729">
    <property type="entry name" value="Rossmann-like_a/b/a_fold"/>
</dbReference>
<dbReference type="InterPro" id="IPR009008">
    <property type="entry name" value="Val/Leu/Ile-tRNA-synth_edit"/>
</dbReference>
<dbReference type="NCBIfam" id="TIGR00396">
    <property type="entry name" value="leuS_bact"/>
    <property type="match status" value="1"/>
</dbReference>
<dbReference type="PANTHER" id="PTHR43740:SF2">
    <property type="entry name" value="LEUCINE--TRNA LIGASE, MITOCHONDRIAL"/>
    <property type="match status" value="1"/>
</dbReference>
<dbReference type="PANTHER" id="PTHR43740">
    <property type="entry name" value="LEUCYL-TRNA SYNTHETASE"/>
    <property type="match status" value="1"/>
</dbReference>
<dbReference type="Pfam" id="PF00133">
    <property type="entry name" value="tRNA-synt_1"/>
    <property type="match status" value="1"/>
</dbReference>
<dbReference type="Pfam" id="PF13603">
    <property type="entry name" value="tRNA-synt_1_2"/>
    <property type="match status" value="1"/>
</dbReference>
<dbReference type="Pfam" id="PF09334">
    <property type="entry name" value="tRNA-synt_1g"/>
    <property type="match status" value="1"/>
</dbReference>
<dbReference type="PRINTS" id="PR00985">
    <property type="entry name" value="TRNASYNTHLEU"/>
</dbReference>
<dbReference type="SUPFAM" id="SSF52374">
    <property type="entry name" value="Nucleotidylyl transferase"/>
    <property type="match status" value="1"/>
</dbReference>
<dbReference type="SUPFAM" id="SSF50677">
    <property type="entry name" value="ValRS/IleRS/LeuRS editing domain"/>
    <property type="match status" value="1"/>
</dbReference>
<dbReference type="PROSITE" id="PS00178">
    <property type="entry name" value="AA_TRNA_LIGASE_I"/>
    <property type="match status" value="1"/>
</dbReference>
<evidence type="ECO:0000250" key="1"/>
<evidence type="ECO:0000305" key="2"/>
<evidence type="ECO:0007829" key="3">
    <source>
        <dbReference type="PDB" id="3O0A"/>
    </source>
</evidence>
<evidence type="ECO:0007829" key="4">
    <source>
        <dbReference type="PDB" id="3PZ0"/>
    </source>
</evidence>